<comment type="function">
    <text evidence="2 3 8 9">The production of the second messenger molecules diacylglycerol (DAG) and inositol 1,4,5-trisphosphate (IP3) is mediated by activated phosphatidylinositol-specific phospholipase C enzymes. In vitro, hydrolyzes PtdIns(4,5)P2 in a Ca(2+)-dependent manner. Triggers intracellular Ca(2+) oscillations in oocytes solely during M phase and is involved in inducing oocyte activation and initiating embryonic development up to the blastocyst stage. Is therefore a strong candidate for the egg-activating soluble sperm factor that is transferred from the sperm into the egg cytoplasm following gamete membrane fusion. May exert an inhibitory effect on phospholipase-C-coupled processes that depend on calcium ions and protein kinase C, including CFTR trafficking and function.</text>
</comment>
<comment type="catalytic activity">
    <reaction evidence="3">
        <text>a 1,2-diacyl-sn-glycero-3-phospho-(1D-myo-inositol-4,5-bisphosphate) + H2O = 1D-myo-inositol 1,4,5-trisphosphate + a 1,2-diacyl-sn-glycerol + H(+)</text>
        <dbReference type="Rhea" id="RHEA:33179"/>
        <dbReference type="ChEBI" id="CHEBI:15377"/>
        <dbReference type="ChEBI" id="CHEBI:15378"/>
        <dbReference type="ChEBI" id="CHEBI:17815"/>
        <dbReference type="ChEBI" id="CHEBI:58456"/>
        <dbReference type="ChEBI" id="CHEBI:203600"/>
        <dbReference type="EC" id="3.1.4.11"/>
    </reaction>
    <physiologicalReaction direction="left-to-right" evidence="3">
        <dbReference type="Rhea" id="RHEA:33180"/>
    </physiologicalReaction>
</comment>
<comment type="cofactor">
    <cofactor evidence="3">
        <name>Ca(2+)</name>
        <dbReference type="ChEBI" id="CHEBI:29108"/>
    </cofactor>
</comment>
<comment type="subunit">
    <text evidence="3">Interacts via its C2 domain with PtdIns(3)P and, to a lesser extent, PtdIns(5)P in vitro.</text>
</comment>
<comment type="subcellular location">
    <subcellularLocation>
        <location evidence="3">Nucleus</location>
    </subcellularLocation>
    <subcellularLocation>
        <location evidence="3">Cytoplasm</location>
        <location evidence="3">Perinuclear region</location>
    </subcellularLocation>
    <text evidence="3">Exhibits alternative cytoplasmic/nuclear localization during development. Translocates from the pronucleus into cytoplasm upon nuclear envelope breakdown for mitosis and localizes again to the pronucleus at interphase following meiosis and mitosis (By similarity).</text>
</comment>
<comment type="domain">
    <text evidence="3">The EF-hand and C2 domains are essential for triggering Ca(2+) oscillating activity and the regulation of PLCZ1 enzyme activity.</text>
</comment>
<comment type="domain">
    <text evidence="3">The X-Y linker region between PI-PLC X-box and Y-box domains may be a target for proteolysis and may play an important regulatory role during fertilization.</text>
</comment>
<keyword id="KW-0106">Calcium</keyword>
<keyword id="KW-0963">Cytoplasm</keyword>
<keyword id="KW-0217">Developmental protein</keyword>
<keyword id="KW-0278">Fertilization</keyword>
<keyword id="KW-0378">Hydrolase</keyword>
<keyword id="KW-0442">Lipid degradation</keyword>
<keyword id="KW-0443">Lipid metabolism</keyword>
<keyword id="KW-0539">Nucleus</keyword>
<keyword id="KW-1185">Reference proteome</keyword>
<keyword id="KW-0807">Transducer</keyword>
<protein>
    <recommendedName>
        <fullName>1-phosphatidylinositol 4,5-bisphosphate phosphodiesterase zeta-1</fullName>
        <ecNumber>3.1.4.11</ecNumber>
    </recommendedName>
    <alternativeName>
        <fullName>Phosphoinositide phospholipase C-zeta-1</fullName>
    </alternativeName>
    <alternativeName>
        <fullName evidence="2">Phospholipase C-zeta-1</fullName>
        <shortName evidence="2">PLC-zeta-1</shortName>
    </alternativeName>
</protein>
<organism>
    <name type="scientific">Macaca fascicularis</name>
    <name type="common">Crab-eating macaque</name>
    <name type="synonym">Cynomolgus monkey</name>
    <dbReference type="NCBI Taxonomy" id="9541"/>
    <lineage>
        <taxon>Eukaryota</taxon>
        <taxon>Metazoa</taxon>
        <taxon>Chordata</taxon>
        <taxon>Craniata</taxon>
        <taxon>Vertebrata</taxon>
        <taxon>Euteleostomi</taxon>
        <taxon>Mammalia</taxon>
        <taxon>Eutheria</taxon>
        <taxon>Euarchontoglires</taxon>
        <taxon>Primates</taxon>
        <taxon>Haplorrhini</taxon>
        <taxon>Catarrhini</taxon>
        <taxon>Cercopithecidae</taxon>
        <taxon>Cercopithecinae</taxon>
        <taxon>Macaca</taxon>
    </lineage>
</organism>
<name>PLCZ1_MACFA</name>
<feature type="chain" id="PRO_0000347245" description="1-phosphatidylinositol 4,5-bisphosphate phosphodiesterase zeta-1">
    <location>
        <begin position="1"/>
        <end position="641"/>
    </location>
</feature>
<feature type="domain" description="EF-hand" evidence="7">
    <location>
        <begin position="35"/>
        <end position="70"/>
    </location>
</feature>
<feature type="domain" description="PI-PLC X-box" evidence="5">
    <location>
        <begin position="155"/>
        <end position="299"/>
    </location>
</feature>
<feature type="domain" description="PI-PLC Y-box" evidence="6">
    <location>
        <begin position="382"/>
        <end position="498"/>
    </location>
</feature>
<feature type="domain" description="C2" evidence="4">
    <location>
        <begin position="498"/>
        <end position="622"/>
    </location>
</feature>
<feature type="active site" evidence="1 5">
    <location>
        <position position="170"/>
    </location>
</feature>
<feature type="active site" evidence="1 5">
    <location>
        <position position="215"/>
    </location>
</feature>
<feature type="sequence conflict" description="In Ref. 2; BAB63054." evidence="9" ref="2">
    <original>EK</original>
    <variation>R</variation>
    <location>
        <begin position="337"/>
        <end position="338"/>
    </location>
</feature>
<gene>
    <name evidence="10" type="primary">PLCZ1</name>
    <name type="ORF">QtsA-14035</name>
    <name type="ORF">QtsA-14094</name>
</gene>
<dbReference type="EC" id="3.1.4.11"/>
<dbReference type="EMBL" id="AB070109">
    <property type="protein sequence ID" value="BAB63054.1"/>
    <property type="molecule type" value="mRNA"/>
</dbReference>
<dbReference type="EMBL" id="AB070108">
    <property type="protein sequence ID" value="BAB63053.1"/>
    <property type="molecule type" value="mRNA"/>
</dbReference>
<dbReference type="RefSeq" id="NP_001306483.1">
    <property type="nucleotide sequence ID" value="NM_001319554.1"/>
</dbReference>
<dbReference type="SMR" id="Q95JS1"/>
<dbReference type="STRING" id="9541.ENSMFAP00000008887"/>
<dbReference type="eggNOG" id="KOG0169">
    <property type="taxonomic scope" value="Eukaryota"/>
</dbReference>
<dbReference type="Proteomes" id="UP000233100">
    <property type="component" value="Unplaced"/>
</dbReference>
<dbReference type="GO" id="GO:0005634">
    <property type="term" value="C:nucleus"/>
    <property type="evidence" value="ECO:0007669"/>
    <property type="project" value="UniProtKB-SubCell"/>
</dbReference>
<dbReference type="GO" id="GO:0048471">
    <property type="term" value="C:perinuclear region of cytoplasm"/>
    <property type="evidence" value="ECO:0007669"/>
    <property type="project" value="UniProtKB-SubCell"/>
</dbReference>
<dbReference type="GO" id="GO:0005509">
    <property type="term" value="F:calcium ion binding"/>
    <property type="evidence" value="ECO:0007669"/>
    <property type="project" value="InterPro"/>
</dbReference>
<dbReference type="GO" id="GO:0004435">
    <property type="term" value="F:phosphatidylinositol-4,5-bisphosphate phospholipase C activity"/>
    <property type="evidence" value="ECO:0007669"/>
    <property type="project" value="UniProtKB-EC"/>
</dbReference>
<dbReference type="GO" id="GO:0007343">
    <property type="term" value="P:egg activation"/>
    <property type="evidence" value="ECO:0000250"/>
    <property type="project" value="UniProtKB"/>
</dbReference>
<dbReference type="GO" id="GO:0035556">
    <property type="term" value="P:intracellular signal transduction"/>
    <property type="evidence" value="ECO:0007669"/>
    <property type="project" value="InterPro"/>
</dbReference>
<dbReference type="GO" id="GO:0016042">
    <property type="term" value="P:lipid catabolic process"/>
    <property type="evidence" value="ECO:0007669"/>
    <property type="project" value="UniProtKB-KW"/>
</dbReference>
<dbReference type="GO" id="GO:0060470">
    <property type="term" value="P:positive regulation of cytosolic calcium ion concentration involved in egg activation"/>
    <property type="evidence" value="ECO:0007669"/>
    <property type="project" value="TreeGrafter"/>
</dbReference>
<dbReference type="CDD" id="cd00275">
    <property type="entry name" value="C2_PLC_like"/>
    <property type="match status" value="1"/>
</dbReference>
<dbReference type="CDD" id="cd08595">
    <property type="entry name" value="PI-PLCc_zeta"/>
    <property type="match status" value="1"/>
</dbReference>
<dbReference type="FunFam" id="1.10.238.10:FF:000005">
    <property type="entry name" value="Phosphoinositide phospholipase C"/>
    <property type="match status" value="1"/>
</dbReference>
<dbReference type="FunFam" id="1.10.238.10:FF:000357">
    <property type="entry name" value="Phosphoinositide phospholipase C"/>
    <property type="match status" value="1"/>
</dbReference>
<dbReference type="FunFam" id="2.60.40.150:FF:000147">
    <property type="entry name" value="Phosphoinositide phospholipase C"/>
    <property type="match status" value="1"/>
</dbReference>
<dbReference type="Gene3D" id="2.60.40.150">
    <property type="entry name" value="C2 domain"/>
    <property type="match status" value="1"/>
</dbReference>
<dbReference type="Gene3D" id="1.10.238.10">
    <property type="entry name" value="EF-hand"/>
    <property type="match status" value="2"/>
</dbReference>
<dbReference type="Gene3D" id="3.20.20.190">
    <property type="entry name" value="Phosphatidylinositol (PI) phosphodiesterase"/>
    <property type="match status" value="1"/>
</dbReference>
<dbReference type="InterPro" id="IPR000008">
    <property type="entry name" value="C2_dom"/>
</dbReference>
<dbReference type="InterPro" id="IPR035892">
    <property type="entry name" value="C2_domain_sf"/>
</dbReference>
<dbReference type="InterPro" id="IPR011992">
    <property type="entry name" value="EF-hand-dom_pair"/>
</dbReference>
<dbReference type="InterPro" id="IPR002048">
    <property type="entry name" value="EF_hand_dom"/>
</dbReference>
<dbReference type="InterPro" id="IPR001192">
    <property type="entry name" value="PI-PLC_fam"/>
</dbReference>
<dbReference type="InterPro" id="IPR017946">
    <property type="entry name" value="PLC-like_Pdiesterase_TIM-brl"/>
</dbReference>
<dbReference type="InterPro" id="IPR015359">
    <property type="entry name" value="PLC_EF-hand-like"/>
</dbReference>
<dbReference type="InterPro" id="IPR000909">
    <property type="entry name" value="PLipase_C_PInositol-sp_X_dom"/>
</dbReference>
<dbReference type="InterPro" id="IPR001711">
    <property type="entry name" value="PLipase_C_Pinositol-sp_Y"/>
</dbReference>
<dbReference type="PANTHER" id="PTHR10336:SF29">
    <property type="entry name" value="1-PHOSPHATIDYLINOSITOL 4,5-BISPHOSPHATE PHOSPHODIESTERASE ZETA-1"/>
    <property type="match status" value="1"/>
</dbReference>
<dbReference type="PANTHER" id="PTHR10336">
    <property type="entry name" value="PHOSPHOINOSITIDE-SPECIFIC PHOSPHOLIPASE C FAMILY PROTEIN"/>
    <property type="match status" value="1"/>
</dbReference>
<dbReference type="Pfam" id="PF00168">
    <property type="entry name" value="C2"/>
    <property type="match status" value="1"/>
</dbReference>
<dbReference type="Pfam" id="PF09279">
    <property type="entry name" value="EF-hand_like"/>
    <property type="match status" value="1"/>
</dbReference>
<dbReference type="Pfam" id="PF00388">
    <property type="entry name" value="PI-PLC-X"/>
    <property type="match status" value="1"/>
</dbReference>
<dbReference type="Pfam" id="PF00387">
    <property type="entry name" value="PI-PLC-Y"/>
    <property type="match status" value="1"/>
</dbReference>
<dbReference type="PRINTS" id="PR00390">
    <property type="entry name" value="PHPHLIPASEC"/>
</dbReference>
<dbReference type="SMART" id="SM00239">
    <property type="entry name" value="C2"/>
    <property type="match status" value="1"/>
</dbReference>
<dbReference type="SMART" id="SM00148">
    <property type="entry name" value="PLCXc"/>
    <property type="match status" value="1"/>
</dbReference>
<dbReference type="SMART" id="SM00149">
    <property type="entry name" value="PLCYc"/>
    <property type="match status" value="1"/>
</dbReference>
<dbReference type="SUPFAM" id="SSF49562">
    <property type="entry name" value="C2 domain (Calcium/lipid-binding domain, CaLB)"/>
    <property type="match status" value="1"/>
</dbReference>
<dbReference type="SUPFAM" id="SSF47473">
    <property type="entry name" value="EF-hand"/>
    <property type="match status" value="1"/>
</dbReference>
<dbReference type="SUPFAM" id="SSF51695">
    <property type="entry name" value="PLC-like phosphodiesterases"/>
    <property type="match status" value="1"/>
</dbReference>
<dbReference type="PROSITE" id="PS50004">
    <property type="entry name" value="C2"/>
    <property type="match status" value="1"/>
</dbReference>
<dbReference type="PROSITE" id="PS50222">
    <property type="entry name" value="EF_HAND_2"/>
    <property type="match status" value="1"/>
</dbReference>
<dbReference type="PROSITE" id="PS50007">
    <property type="entry name" value="PIPLC_X_DOMAIN"/>
    <property type="match status" value="1"/>
</dbReference>
<dbReference type="PROSITE" id="PS50008">
    <property type="entry name" value="PIPLC_Y_DOMAIN"/>
    <property type="match status" value="1"/>
</dbReference>
<reference evidence="9 11" key="1">
    <citation type="journal article" date="2002" name="Reproduction">
        <title>Sperm phospholipase Czeta from humans and cynomolgus monkeys triggers Ca2+ oscillations, activation and development of mouse oocytes.</title>
        <authorList>
            <person name="Cox L.J."/>
            <person name="Larman M.G."/>
            <person name="Saunders C.M."/>
            <person name="Hashimoto K."/>
            <person name="Swann K."/>
            <person name="Lai F.A."/>
        </authorList>
    </citation>
    <scope>NUCLEOTIDE SEQUENCE [MRNA]</scope>
    <scope>FUNCTION</scope>
    <source>
        <tissue evidence="11">Testis</tissue>
    </source>
</reference>
<reference evidence="10" key="2">
    <citation type="journal article" date="2002" name="BMC Genomics">
        <title>Cynomolgus monkey testicular cDNAs for discovery of novel human genes in the human genome sequence.</title>
        <authorList>
            <person name="Osada N."/>
            <person name="Hida M."/>
            <person name="Kusuda J."/>
            <person name="Tanuma R."/>
            <person name="Hirata M."/>
            <person name="Suto Y."/>
            <person name="Hirai M."/>
            <person name="Terao K."/>
            <person name="Sugano S."/>
            <person name="Hashimoto K."/>
        </authorList>
    </citation>
    <scope>NUCLEOTIDE SEQUENCE [LARGE SCALE MRNA]</scope>
    <source>
        <tissue evidence="10">Testis</tissue>
    </source>
</reference>
<sequence length="641" mass="74551">MEMKWFLSKIQDDFRGGKINLEKTQRLLEKLDIRCSYIHVKRIFKDNDRLKQGRITIEEFRAIYRILTHREEIVEIFNAYSENRKILLENNLVQFLTQEQYTTEMSKTIAFEIIQKYEPIEEVRKARQMSLEGFTRYMDSRECQLFKNECRKVYQDMTHPLNDYFISSSHNTYLVSDQLVGPSDLWGYVSALVKGCRCLEIDCWDGAQNEPVVYHGYTLTSKLLFKTVIQAIHKYAFMTSDYPVVLSLENHCSPAQQEIMADNLQTTFGESLLSDMLADFPDTLPSPEALKFKVLVKNKKIGTLKETHERKGSDKRGKVEEWEEEVADLEEEEEEEEKFKESEIFESVLGENQDKETGVKKLSGVTLFKKKKTRKLKIALALSDLVIYTKAEKFKSFQHSRLYQQFNENNSIGETQARKLSKLRAHEFIFHTRKFITRIYPKATRADSSNFNPQEFWNIGCQMVALNFQTPGLPMDLQNGKFLDNGGSGYILKPHFLRESESYFNPSDIKDSMPITLTIRLISGIQLPLTHSSSNKGDTLVIIEVFGVPNDQMKQQTRVIKKNAFSPRWNETFTFIIHVPELALIRFVVESQGLIAGNEFLGQYTLPLLCMNKGYRRVPLFSRMGESLEPASLFVYVWYVR</sequence>
<accession>Q95JS1</accession>
<accession>Q95JS0</accession>
<proteinExistence type="evidence at transcript level"/>
<evidence type="ECO:0000250" key="1">
    <source>
        <dbReference type="UniProtKB" id="P10688"/>
    </source>
</evidence>
<evidence type="ECO:0000250" key="2">
    <source>
        <dbReference type="UniProtKB" id="Q86YW0"/>
    </source>
</evidence>
<evidence type="ECO:0000250" key="3">
    <source>
        <dbReference type="UniProtKB" id="Q8K4D7"/>
    </source>
</evidence>
<evidence type="ECO:0000255" key="4">
    <source>
        <dbReference type="PROSITE-ProRule" id="PRU00041"/>
    </source>
</evidence>
<evidence type="ECO:0000255" key="5">
    <source>
        <dbReference type="PROSITE-ProRule" id="PRU00270"/>
    </source>
</evidence>
<evidence type="ECO:0000255" key="6">
    <source>
        <dbReference type="PROSITE-ProRule" id="PRU00271"/>
    </source>
</evidence>
<evidence type="ECO:0000255" key="7">
    <source>
        <dbReference type="PROSITE-ProRule" id="PRU00448"/>
    </source>
</evidence>
<evidence type="ECO:0000269" key="8">
    <source>
    </source>
</evidence>
<evidence type="ECO:0000305" key="9"/>
<evidence type="ECO:0000312" key="10">
    <source>
        <dbReference type="EMBL" id="BAB63053.1"/>
    </source>
</evidence>
<evidence type="ECO:0000312" key="11">
    <source>
        <dbReference type="EMBL" id="BAB63054.1"/>
    </source>
</evidence>